<protein>
    <recommendedName>
        <fullName evidence="1">Small ribosomal subunit protein bS20</fullName>
    </recommendedName>
    <alternativeName>
        <fullName evidence="3">30S ribosomal protein S20</fullName>
    </alternativeName>
</protein>
<feature type="chain" id="PRO_1000194242" description="Small ribosomal subunit protein bS20">
    <location>
        <begin position="1"/>
        <end position="100"/>
    </location>
</feature>
<feature type="region of interest" description="Disordered" evidence="2">
    <location>
        <begin position="1"/>
        <end position="26"/>
    </location>
</feature>
<feature type="compositionally biased region" description="Basic residues" evidence="2">
    <location>
        <begin position="1"/>
        <end position="22"/>
    </location>
</feature>
<name>RS20_ACIET</name>
<keyword id="KW-1185">Reference proteome</keyword>
<keyword id="KW-0687">Ribonucleoprotein</keyword>
<keyword id="KW-0689">Ribosomal protein</keyword>
<keyword id="KW-0694">RNA-binding</keyword>
<keyword id="KW-0699">rRNA-binding</keyword>
<sequence>MASGKPKKKNPRLASGRKRARQGLKLNAANTSLRSKYRTAVKNVEKAVLAGDKTKATELFAKAQSVLDTIADKGIFHKNKAARDKSRLSAKVKALALAAA</sequence>
<reference key="1">
    <citation type="submission" date="2009-01" db="EMBL/GenBank/DDBJ databases">
        <title>Complete sequence of Diaphorobacter sp. TPSY.</title>
        <authorList>
            <consortium name="US DOE Joint Genome Institute"/>
            <person name="Lucas S."/>
            <person name="Copeland A."/>
            <person name="Lapidus A."/>
            <person name="Glavina del Rio T."/>
            <person name="Tice H."/>
            <person name="Bruce D."/>
            <person name="Goodwin L."/>
            <person name="Pitluck S."/>
            <person name="Chertkov O."/>
            <person name="Brettin T."/>
            <person name="Detter J.C."/>
            <person name="Han C."/>
            <person name="Larimer F."/>
            <person name="Land M."/>
            <person name="Hauser L."/>
            <person name="Kyrpides N."/>
            <person name="Mikhailova N."/>
            <person name="Coates J.D."/>
        </authorList>
    </citation>
    <scope>NUCLEOTIDE SEQUENCE [LARGE SCALE GENOMIC DNA]</scope>
    <source>
        <strain>TPSY</strain>
    </source>
</reference>
<proteinExistence type="inferred from homology"/>
<accession>B9MCT1</accession>
<organism>
    <name type="scientific">Acidovorax ebreus (strain TPSY)</name>
    <name type="common">Diaphorobacter sp. (strain TPSY)</name>
    <dbReference type="NCBI Taxonomy" id="535289"/>
    <lineage>
        <taxon>Bacteria</taxon>
        <taxon>Pseudomonadati</taxon>
        <taxon>Pseudomonadota</taxon>
        <taxon>Betaproteobacteria</taxon>
        <taxon>Burkholderiales</taxon>
        <taxon>Comamonadaceae</taxon>
        <taxon>Diaphorobacter</taxon>
    </lineage>
</organism>
<dbReference type="EMBL" id="CP001392">
    <property type="protein sequence ID" value="ACM33863.1"/>
    <property type="molecule type" value="Genomic_DNA"/>
</dbReference>
<dbReference type="RefSeq" id="WP_011806141.1">
    <property type="nucleotide sequence ID" value="NC_011992.1"/>
</dbReference>
<dbReference type="SMR" id="B9MCT1"/>
<dbReference type="GeneID" id="84680813"/>
<dbReference type="KEGG" id="dia:Dtpsy_2427"/>
<dbReference type="eggNOG" id="COG0268">
    <property type="taxonomic scope" value="Bacteria"/>
</dbReference>
<dbReference type="HOGENOM" id="CLU_160655_4_0_4"/>
<dbReference type="Proteomes" id="UP000000450">
    <property type="component" value="Chromosome"/>
</dbReference>
<dbReference type="GO" id="GO:0005829">
    <property type="term" value="C:cytosol"/>
    <property type="evidence" value="ECO:0007669"/>
    <property type="project" value="TreeGrafter"/>
</dbReference>
<dbReference type="GO" id="GO:0015935">
    <property type="term" value="C:small ribosomal subunit"/>
    <property type="evidence" value="ECO:0007669"/>
    <property type="project" value="TreeGrafter"/>
</dbReference>
<dbReference type="GO" id="GO:0070181">
    <property type="term" value="F:small ribosomal subunit rRNA binding"/>
    <property type="evidence" value="ECO:0007669"/>
    <property type="project" value="TreeGrafter"/>
</dbReference>
<dbReference type="GO" id="GO:0003735">
    <property type="term" value="F:structural constituent of ribosome"/>
    <property type="evidence" value="ECO:0007669"/>
    <property type="project" value="InterPro"/>
</dbReference>
<dbReference type="GO" id="GO:0006412">
    <property type="term" value="P:translation"/>
    <property type="evidence" value="ECO:0007669"/>
    <property type="project" value="UniProtKB-UniRule"/>
</dbReference>
<dbReference type="FunFam" id="1.20.58.110:FF:000001">
    <property type="entry name" value="30S ribosomal protein S20"/>
    <property type="match status" value="1"/>
</dbReference>
<dbReference type="Gene3D" id="1.20.58.110">
    <property type="entry name" value="Ribosomal protein S20"/>
    <property type="match status" value="1"/>
</dbReference>
<dbReference type="HAMAP" id="MF_00500">
    <property type="entry name" value="Ribosomal_bS20"/>
    <property type="match status" value="1"/>
</dbReference>
<dbReference type="InterPro" id="IPR002583">
    <property type="entry name" value="Ribosomal_bS20"/>
</dbReference>
<dbReference type="InterPro" id="IPR036510">
    <property type="entry name" value="Ribosomal_bS20_sf"/>
</dbReference>
<dbReference type="NCBIfam" id="TIGR00029">
    <property type="entry name" value="S20"/>
    <property type="match status" value="1"/>
</dbReference>
<dbReference type="PANTHER" id="PTHR33398">
    <property type="entry name" value="30S RIBOSOMAL PROTEIN S20"/>
    <property type="match status" value="1"/>
</dbReference>
<dbReference type="PANTHER" id="PTHR33398:SF1">
    <property type="entry name" value="SMALL RIBOSOMAL SUBUNIT PROTEIN BS20C"/>
    <property type="match status" value="1"/>
</dbReference>
<dbReference type="Pfam" id="PF01649">
    <property type="entry name" value="Ribosomal_S20p"/>
    <property type="match status" value="1"/>
</dbReference>
<dbReference type="SUPFAM" id="SSF46992">
    <property type="entry name" value="Ribosomal protein S20"/>
    <property type="match status" value="1"/>
</dbReference>
<gene>
    <name evidence="1" type="primary">rpsT</name>
    <name type="ordered locus">Dtpsy_2427</name>
</gene>
<comment type="function">
    <text evidence="1">Binds directly to 16S ribosomal RNA.</text>
</comment>
<comment type="similarity">
    <text evidence="1">Belongs to the bacterial ribosomal protein bS20 family.</text>
</comment>
<evidence type="ECO:0000255" key="1">
    <source>
        <dbReference type="HAMAP-Rule" id="MF_00500"/>
    </source>
</evidence>
<evidence type="ECO:0000256" key="2">
    <source>
        <dbReference type="SAM" id="MobiDB-lite"/>
    </source>
</evidence>
<evidence type="ECO:0000305" key="3"/>